<name>TM127_HUMAN</name>
<keyword id="KW-0007">Acetylation</keyword>
<keyword id="KW-1003">Cell membrane</keyword>
<keyword id="KW-0963">Cytoplasm</keyword>
<keyword id="KW-0472">Membrane</keyword>
<keyword id="KW-0597">Phosphoprotein</keyword>
<keyword id="KW-1267">Proteomics identification</keyword>
<keyword id="KW-1185">Reference proteome</keyword>
<keyword id="KW-0812">Transmembrane</keyword>
<keyword id="KW-1133">Transmembrane helix</keyword>
<keyword id="KW-0043">Tumor suppressor</keyword>
<organism>
    <name type="scientific">Homo sapiens</name>
    <name type="common">Human</name>
    <dbReference type="NCBI Taxonomy" id="9606"/>
    <lineage>
        <taxon>Eukaryota</taxon>
        <taxon>Metazoa</taxon>
        <taxon>Chordata</taxon>
        <taxon>Craniata</taxon>
        <taxon>Vertebrata</taxon>
        <taxon>Euteleostomi</taxon>
        <taxon>Mammalia</taxon>
        <taxon>Eutheria</taxon>
        <taxon>Euarchontoglires</taxon>
        <taxon>Primates</taxon>
        <taxon>Haplorrhini</taxon>
        <taxon>Catarrhini</taxon>
        <taxon>Hominidae</taxon>
        <taxon>Homo</taxon>
    </lineage>
</organism>
<gene>
    <name type="primary">TMEM127</name>
</gene>
<proteinExistence type="evidence at protein level"/>
<dbReference type="EMBL" id="AK000514">
    <property type="protein sequence ID" value="BAA91220.1"/>
    <property type="molecule type" value="mRNA"/>
</dbReference>
<dbReference type="EMBL" id="AC004020">
    <property type="protein sequence ID" value="AAC23494.1"/>
    <property type="molecule type" value="Genomic_DNA"/>
</dbReference>
<dbReference type="EMBL" id="AC012307">
    <property type="protein sequence ID" value="AAY24224.1"/>
    <property type="molecule type" value="Genomic_DNA"/>
</dbReference>
<dbReference type="EMBL" id="CH471207">
    <property type="protein sequence ID" value="EAW71376.1"/>
    <property type="molecule type" value="Genomic_DNA"/>
</dbReference>
<dbReference type="EMBL" id="CH471207">
    <property type="protein sequence ID" value="EAW71377.1"/>
    <property type="molecule type" value="Genomic_DNA"/>
</dbReference>
<dbReference type="EMBL" id="CH471207">
    <property type="protein sequence ID" value="EAW71378.1"/>
    <property type="molecule type" value="Genomic_DNA"/>
</dbReference>
<dbReference type="EMBL" id="CH471207">
    <property type="protein sequence ID" value="EAW71379.1"/>
    <property type="molecule type" value="Genomic_DNA"/>
</dbReference>
<dbReference type="EMBL" id="BC028575">
    <property type="protein sequence ID" value="AAH28575.1"/>
    <property type="molecule type" value="mRNA"/>
</dbReference>
<dbReference type="EMBL" id="BC039892">
    <property type="protein sequence ID" value="AAH39892.1"/>
    <property type="molecule type" value="mRNA"/>
</dbReference>
<dbReference type="CCDS" id="CCDS2018.1"/>
<dbReference type="RefSeq" id="NP_001180233.1">
    <property type="nucleotide sequence ID" value="NM_001193304.3"/>
</dbReference>
<dbReference type="RefSeq" id="NP_060319.1">
    <property type="nucleotide sequence ID" value="NM_017849.4"/>
</dbReference>
<dbReference type="SMR" id="O75204"/>
<dbReference type="BioGRID" id="120786">
    <property type="interactions" value="7"/>
</dbReference>
<dbReference type="FunCoup" id="O75204">
    <property type="interactions" value="1711"/>
</dbReference>
<dbReference type="STRING" id="9606.ENSP00000258439"/>
<dbReference type="TCDB" id="9.B.419.1.1">
    <property type="family name" value="the transmembrane 127 (tmem127) family"/>
</dbReference>
<dbReference type="iPTMnet" id="O75204"/>
<dbReference type="PhosphoSitePlus" id="O75204"/>
<dbReference type="BioMuta" id="TMEM127"/>
<dbReference type="jPOST" id="O75204"/>
<dbReference type="MassIVE" id="O75204"/>
<dbReference type="PaxDb" id="9606-ENSP00000258439"/>
<dbReference type="PeptideAtlas" id="O75204"/>
<dbReference type="ProteomicsDB" id="49868"/>
<dbReference type="Pumba" id="O75204"/>
<dbReference type="Antibodypedia" id="32415">
    <property type="antibodies" value="40 antibodies from 17 providers"/>
</dbReference>
<dbReference type="DNASU" id="55654"/>
<dbReference type="Ensembl" id="ENST00000258439.8">
    <property type="protein sequence ID" value="ENSP00000258439.3"/>
    <property type="gene ID" value="ENSG00000135956.11"/>
</dbReference>
<dbReference type="Ensembl" id="ENST00000432959.2">
    <property type="protein sequence ID" value="ENSP00000416660.1"/>
    <property type="gene ID" value="ENSG00000135956.11"/>
</dbReference>
<dbReference type="GeneID" id="55654"/>
<dbReference type="KEGG" id="hsa:55654"/>
<dbReference type="MANE-Select" id="ENST00000258439.8">
    <property type="protein sequence ID" value="ENSP00000258439.3"/>
    <property type="RefSeq nucleotide sequence ID" value="NM_017849.4"/>
    <property type="RefSeq protein sequence ID" value="NP_060319.1"/>
</dbReference>
<dbReference type="UCSC" id="uc002svq.4">
    <property type="organism name" value="human"/>
</dbReference>
<dbReference type="AGR" id="HGNC:26038"/>
<dbReference type="CTD" id="55654"/>
<dbReference type="DisGeNET" id="55654"/>
<dbReference type="GeneCards" id="TMEM127"/>
<dbReference type="GeneReviews" id="TMEM127"/>
<dbReference type="HGNC" id="HGNC:26038">
    <property type="gene designation" value="TMEM127"/>
</dbReference>
<dbReference type="HPA" id="ENSG00000135956">
    <property type="expression patterns" value="Low tissue specificity"/>
</dbReference>
<dbReference type="MalaCards" id="TMEM127"/>
<dbReference type="MIM" id="171300">
    <property type="type" value="phenotype"/>
</dbReference>
<dbReference type="MIM" id="613403">
    <property type="type" value="gene"/>
</dbReference>
<dbReference type="neXtProt" id="NX_O75204"/>
<dbReference type="OpenTargets" id="ENSG00000135956"/>
<dbReference type="Orphanet" id="404511">
    <property type="disease" value="Clear cell papillary renal cell carcinoma"/>
</dbReference>
<dbReference type="Orphanet" id="29072">
    <property type="disease" value="Hereditary pheochromocytoma-paraganglioma"/>
</dbReference>
<dbReference type="PharmGKB" id="PA143485647"/>
<dbReference type="VEuPathDB" id="HostDB:ENSG00000135956"/>
<dbReference type="eggNOG" id="ENOG502QTCN">
    <property type="taxonomic scope" value="Eukaryota"/>
</dbReference>
<dbReference type="GeneTree" id="ENSGT00390000005154"/>
<dbReference type="InParanoid" id="O75204"/>
<dbReference type="OMA" id="CVFWVIA"/>
<dbReference type="OrthoDB" id="10030622at2759"/>
<dbReference type="PAN-GO" id="O75204">
    <property type="GO annotations" value="2 GO annotations based on evolutionary models"/>
</dbReference>
<dbReference type="PhylomeDB" id="O75204"/>
<dbReference type="TreeFam" id="TF328671"/>
<dbReference type="PathwayCommons" id="O75204"/>
<dbReference type="BioGRID-ORCS" id="55654">
    <property type="hits" value="137 hits in 1168 CRISPR screens"/>
</dbReference>
<dbReference type="ChiTaRS" id="TMEM127">
    <property type="organism name" value="human"/>
</dbReference>
<dbReference type="GenomeRNAi" id="55654"/>
<dbReference type="Pharos" id="O75204">
    <property type="development level" value="Tbio"/>
</dbReference>
<dbReference type="PRO" id="PR:O75204"/>
<dbReference type="Proteomes" id="UP000005640">
    <property type="component" value="Chromosome 2"/>
</dbReference>
<dbReference type="RNAct" id="O75204">
    <property type="molecule type" value="protein"/>
</dbReference>
<dbReference type="Bgee" id="ENSG00000135956">
    <property type="expression patterns" value="Expressed in leukocyte and 197 other cell types or tissues"/>
</dbReference>
<dbReference type="ExpressionAtlas" id="O75204">
    <property type="expression patterns" value="baseline and differential"/>
</dbReference>
<dbReference type="GO" id="GO:0005737">
    <property type="term" value="C:cytoplasm"/>
    <property type="evidence" value="ECO:0000314"/>
    <property type="project" value="UniProtKB"/>
</dbReference>
<dbReference type="GO" id="GO:0005769">
    <property type="term" value="C:early endosome"/>
    <property type="evidence" value="ECO:0000314"/>
    <property type="project" value="MGI"/>
</dbReference>
<dbReference type="GO" id="GO:0016020">
    <property type="term" value="C:membrane"/>
    <property type="evidence" value="ECO:0000318"/>
    <property type="project" value="GO_Central"/>
</dbReference>
<dbReference type="GO" id="GO:0005886">
    <property type="term" value="C:plasma membrane"/>
    <property type="evidence" value="ECO:0000314"/>
    <property type="project" value="UniProtKB"/>
</dbReference>
<dbReference type="GO" id="GO:0031267">
    <property type="term" value="F:small GTPase binding"/>
    <property type="evidence" value="ECO:0000314"/>
    <property type="project" value="MGI"/>
</dbReference>
<dbReference type="GO" id="GO:0007032">
    <property type="term" value="P:endosome organization"/>
    <property type="evidence" value="ECO:0007669"/>
    <property type="project" value="Ensembl"/>
</dbReference>
<dbReference type="GO" id="GO:0008285">
    <property type="term" value="P:negative regulation of cell population proliferation"/>
    <property type="evidence" value="ECO:0000315"/>
    <property type="project" value="UniProtKB"/>
</dbReference>
<dbReference type="GO" id="GO:0032007">
    <property type="term" value="P:negative regulation of TOR signaling"/>
    <property type="evidence" value="ECO:0000315"/>
    <property type="project" value="UniProtKB"/>
</dbReference>
<dbReference type="GO" id="GO:0032006">
    <property type="term" value="P:regulation of TOR signaling"/>
    <property type="evidence" value="ECO:0000318"/>
    <property type="project" value="GO_Central"/>
</dbReference>
<dbReference type="InterPro" id="IPR033331">
    <property type="entry name" value="TMEM127"/>
</dbReference>
<dbReference type="InterPro" id="IPR046795">
    <property type="entry name" value="TMEM127_TM"/>
</dbReference>
<dbReference type="PANTHER" id="PTHR28358">
    <property type="entry name" value="TRANSMEMBRANE PROTEIN 127"/>
    <property type="match status" value="1"/>
</dbReference>
<dbReference type="PANTHER" id="PTHR28358:SF1">
    <property type="entry name" value="TRANSMEMBRANE PROTEIN 127"/>
    <property type="match status" value="1"/>
</dbReference>
<dbReference type="Pfam" id="PF20517">
    <property type="entry name" value="TMEM127"/>
    <property type="match status" value="1"/>
</dbReference>
<comment type="function">
    <text evidence="3">Controls cell proliferation acting as a negative regulator of TOR signaling pathway mediated by mTORC1. May act as a tumor suppressor.</text>
</comment>
<comment type="subcellular location">
    <subcellularLocation>
        <location evidence="3 4">Cell membrane</location>
        <topology evidence="3">Multi-pass membrane protein</topology>
    </subcellularLocation>
    <subcellularLocation>
        <location evidence="3 4">Cytoplasm</location>
    </subcellularLocation>
    <text evidence="3 4">Association of TMEM127 with the cell membrane is enhanced by inhibition of endocytosis. In the cytoplasm, it colocalizes with markers of early endosomal structures, Golgi apparatus and lysosomes.</text>
</comment>
<comment type="tissue specificity">
    <text evidence="3">Widely expressed.</text>
</comment>
<comment type="disease" evidence="3 4">
    <disease id="DI-02160">
        <name>Pheochromocytoma</name>
        <acronym>PCC</acronym>
        <description>A catecholamine-producing tumor of chromaffin tissue of the adrenal medulla or sympathetic paraganglia. The cardinal symptom, reflecting the increased secretion of epinephrine and norepinephrine, is hypertension, which may be persistent or intermittent.</description>
        <dbReference type="MIM" id="171300"/>
    </disease>
    <text>Disease susceptibility is associated with variants affecting the gene represented in this entry.</text>
</comment>
<comment type="miscellaneous">
    <text evidence="7">Consistent with the observation that mTORC1 signaling regulates cell growth and size in many species, TMEM127 knockdown cells are larger and proliferate at higher rates compared to control cell lines. In contrast, cell proliferation is reduced in cells overexpressing TMEM127 (PubMed:20154675).</text>
</comment>
<comment type="similarity">
    <text evidence="6">Belongs to the TMEM127 family.</text>
</comment>
<feature type="chain" id="PRO_0000251718" description="Transmembrane protein 127">
    <location>
        <begin position="1"/>
        <end position="238"/>
    </location>
</feature>
<feature type="transmembrane region" description="Helical" evidence="1">
    <location>
        <begin position="96"/>
        <end position="116"/>
    </location>
</feature>
<feature type="transmembrane region" description="Helical" evidence="1">
    <location>
        <begin position="130"/>
        <end position="150"/>
    </location>
</feature>
<feature type="transmembrane region" description="Helical" evidence="1">
    <location>
        <begin position="169"/>
        <end position="189"/>
    </location>
</feature>
<feature type="region of interest" description="Disordered" evidence="2">
    <location>
        <begin position="1"/>
        <end position="27"/>
    </location>
</feature>
<feature type="compositionally biased region" description="Gly residues" evidence="2">
    <location>
        <begin position="1"/>
        <end position="11"/>
    </location>
</feature>
<feature type="modified residue" description="N-acetylmethionine" evidence="5 9">
    <location>
        <position position="1"/>
    </location>
</feature>
<feature type="modified residue" description="Phosphoserine" evidence="8">
    <location>
        <position position="17"/>
    </location>
</feature>
<feature type="sequence variant" id="VAR_072273" description="In PCC; dbSNP:rs121908818." evidence="4">
    <original>W</original>
    <variation>S</variation>
    <location>
        <position position="53"/>
    </location>
</feature>
<feature type="sequence variant" id="VAR_072274" description="In PCC; localized diffusely within the cytoplasm; dbSNP:rs121908819." evidence="4">
    <original>D</original>
    <variation>N</variation>
    <location>
        <position position="70"/>
    </location>
</feature>
<feature type="sequence variant" id="VAR_072275" description="In PCC; dbSNP:rs121908820." evidence="4">
    <original>G</original>
    <variation>R</variation>
    <location>
        <position position="73"/>
    </location>
</feature>
<feature type="sequence variant" id="VAR_063595" description="In PCC; dbSNP:rs121908823." evidence="3 4">
    <original>V</original>
    <variation>M</variation>
    <location>
        <position position="90"/>
    </location>
</feature>
<feature type="sequence variant" id="VAR_072276" description="In PCC; localized diffusely within the cytoplasm; dbSNP:rs121908824." evidence="4">
    <original>R</original>
    <variation>W</variation>
    <location>
        <position position="94"/>
    </location>
</feature>
<feature type="sequence variant" id="VAR_072277" description="In PCC; localized diffusely within the cytoplasm; dbSNP:rs121908827." evidence="4">
    <original>C</original>
    <variation>R</variation>
    <location>
        <position position="140"/>
    </location>
</feature>
<feature type="sequence variant" id="VAR_072278" description="In PCC; localized diffusely within the cytoplasm; dbSNP:rs121908828." evidence="4">
    <original>C</original>
    <variation>Y</variation>
    <location>
        <position position="140"/>
    </location>
</feature>
<accession>O75204</accession>
<accession>D3DXH0</accession>
<evidence type="ECO:0000255" key="1"/>
<evidence type="ECO:0000256" key="2">
    <source>
        <dbReference type="SAM" id="MobiDB-lite"/>
    </source>
</evidence>
<evidence type="ECO:0000269" key="3">
    <source>
    </source>
</evidence>
<evidence type="ECO:0000269" key="4">
    <source>
    </source>
</evidence>
<evidence type="ECO:0000269" key="5">
    <source>
    </source>
</evidence>
<evidence type="ECO:0000305" key="6"/>
<evidence type="ECO:0000305" key="7">
    <source>
    </source>
</evidence>
<evidence type="ECO:0007744" key="8">
    <source>
    </source>
</evidence>
<evidence type="ECO:0007744" key="9">
    <source>
    </source>
</evidence>
<protein>
    <recommendedName>
        <fullName>Transmembrane protein 127</fullName>
    </recommendedName>
</protein>
<reference key="1">
    <citation type="journal article" date="2004" name="Nat. Genet.">
        <title>Complete sequencing and characterization of 21,243 full-length human cDNAs.</title>
        <authorList>
            <person name="Ota T."/>
            <person name="Suzuki Y."/>
            <person name="Nishikawa T."/>
            <person name="Otsuki T."/>
            <person name="Sugiyama T."/>
            <person name="Irie R."/>
            <person name="Wakamatsu A."/>
            <person name="Hayashi K."/>
            <person name="Sato H."/>
            <person name="Nagai K."/>
            <person name="Kimura K."/>
            <person name="Makita H."/>
            <person name="Sekine M."/>
            <person name="Obayashi M."/>
            <person name="Nishi T."/>
            <person name="Shibahara T."/>
            <person name="Tanaka T."/>
            <person name="Ishii S."/>
            <person name="Yamamoto J."/>
            <person name="Saito K."/>
            <person name="Kawai Y."/>
            <person name="Isono Y."/>
            <person name="Nakamura Y."/>
            <person name="Nagahari K."/>
            <person name="Murakami K."/>
            <person name="Yasuda T."/>
            <person name="Iwayanagi T."/>
            <person name="Wagatsuma M."/>
            <person name="Shiratori A."/>
            <person name="Sudo H."/>
            <person name="Hosoiri T."/>
            <person name="Kaku Y."/>
            <person name="Kodaira H."/>
            <person name="Kondo H."/>
            <person name="Sugawara M."/>
            <person name="Takahashi M."/>
            <person name="Kanda K."/>
            <person name="Yokoi T."/>
            <person name="Furuya T."/>
            <person name="Kikkawa E."/>
            <person name="Omura Y."/>
            <person name="Abe K."/>
            <person name="Kamihara K."/>
            <person name="Katsuta N."/>
            <person name="Sato K."/>
            <person name="Tanikawa M."/>
            <person name="Yamazaki M."/>
            <person name="Ninomiya K."/>
            <person name="Ishibashi T."/>
            <person name="Yamashita H."/>
            <person name="Murakawa K."/>
            <person name="Fujimori K."/>
            <person name="Tanai H."/>
            <person name="Kimata M."/>
            <person name="Watanabe M."/>
            <person name="Hiraoka S."/>
            <person name="Chiba Y."/>
            <person name="Ishida S."/>
            <person name="Ono Y."/>
            <person name="Takiguchi S."/>
            <person name="Watanabe S."/>
            <person name="Yosida M."/>
            <person name="Hotuta T."/>
            <person name="Kusano J."/>
            <person name="Kanehori K."/>
            <person name="Takahashi-Fujii A."/>
            <person name="Hara H."/>
            <person name="Tanase T.-O."/>
            <person name="Nomura Y."/>
            <person name="Togiya S."/>
            <person name="Komai F."/>
            <person name="Hara R."/>
            <person name="Takeuchi K."/>
            <person name="Arita M."/>
            <person name="Imose N."/>
            <person name="Musashino K."/>
            <person name="Yuuki H."/>
            <person name="Oshima A."/>
            <person name="Sasaki N."/>
            <person name="Aotsuka S."/>
            <person name="Yoshikawa Y."/>
            <person name="Matsunawa H."/>
            <person name="Ichihara T."/>
            <person name="Shiohata N."/>
            <person name="Sano S."/>
            <person name="Moriya S."/>
            <person name="Momiyama H."/>
            <person name="Satoh N."/>
            <person name="Takami S."/>
            <person name="Terashima Y."/>
            <person name="Suzuki O."/>
            <person name="Nakagawa S."/>
            <person name="Senoh A."/>
            <person name="Mizoguchi H."/>
            <person name="Goto Y."/>
            <person name="Shimizu F."/>
            <person name="Wakebe H."/>
            <person name="Hishigaki H."/>
            <person name="Watanabe T."/>
            <person name="Sugiyama A."/>
            <person name="Takemoto M."/>
            <person name="Kawakami B."/>
            <person name="Yamazaki M."/>
            <person name="Watanabe K."/>
            <person name="Kumagai A."/>
            <person name="Itakura S."/>
            <person name="Fukuzumi Y."/>
            <person name="Fujimori Y."/>
            <person name="Komiyama M."/>
            <person name="Tashiro H."/>
            <person name="Tanigami A."/>
            <person name="Fujiwara T."/>
            <person name="Ono T."/>
            <person name="Yamada K."/>
            <person name="Fujii Y."/>
            <person name="Ozaki K."/>
            <person name="Hirao M."/>
            <person name="Ohmori Y."/>
            <person name="Kawabata A."/>
            <person name="Hikiji T."/>
            <person name="Kobatake N."/>
            <person name="Inagaki H."/>
            <person name="Ikema Y."/>
            <person name="Okamoto S."/>
            <person name="Okitani R."/>
            <person name="Kawakami T."/>
            <person name="Noguchi S."/>
            <person name="Itoh T."/>
            <person name="Shigeta K."/>
            <person name="Senba T."/>
            <person name="Matsumura K."/>
            <person name="Nakajima Y."/>
            <person name="Mizuno T."/>
            <person name="Morinaga M."/>
            <person name="Sasaki M."/>
            <person name="Togashi T."/>
            <person name="Oyama M."/>
            <person name="Hata H."/>
            <person name="Watanabe M."/>
            <person name="Komatsu T."/>
            <person name="Mizushima-Sugano J."/>
            <person name="Satoh T."/>
            <person name="Shirai Y."/>
            <person name="Takahashi Y."/>
            <person name="Nakagawa K."/>
            <person name="Okumura K."/>
            <person name="Nagase T."/>
            <person name="Nomura N."/>
            <person name="Kikuchi H."/>
            <person name="Masuho Y."/>
            <person name="Yamashita R."/>
            <person name="Nakai K."/>
            <person name="Yada T."/>
            <person name="Nakamura Y."/>
            <person name="Ohara O."/>
            <person name="Isogai T."/>
            <person name="Sugano S."/>
        </authorList>
    </citation>
    <scope>NUCLEOTIDE SEQUENCE [LARGE SCALE MRNA]</scope>
</reference>
<reference key="2">
    <citation type="journal article" date="1999" name="Genomics">
        <title>Genome duplications and other features in 12 Mb of DNA sequence from human chromosome 16p and 16q.</title>
        <authorList>
            <person name="Loftus B.J."/>
            <person name="Kim U.-J."/>
            <person name="Sneddon V.P."/>
            <person name="Kalush F."/>
            <person name="Brandon R."/>
            <person name="Fuhrmann J."/>
            <person name="Mason T."/>
            <person name="Crosby M.L."/>
            <person name="Barnstead M."/>
            <person name="Cronin L."/>
            <person name="Mays A.D."/>
            <person name="Cao Y."/>
            <person name="Xu R.X."/>
            <person name="Kang H.-L."/>
            <person name="Mitchell S."/>
            <person name="Eichler E.E."/>
            <person name="Harris P.C."/>
            <person name="Venter J.C."/>
            <person name="Adams M.D."/>
        </authorList>
    </citation>
    <scope>NUCLEOTIDE SEQUENCE [LARGE SCALE GENOMIC DNA]</scope>
</reference>
<reference key="3">
    <citation type="submission" date="2005-09" db="EMBL/GenBank/DDBJ databases">
        <authorList>
            <person name="Mural R.J."/>
            <person name="Istrail S."/>
            <person name="Sutton G.G."/>
            <person name="Florea L."/>
            <person name="Halpern A.L."/>
            <person name="Mobarry C.M."/>
            <person name="Lippert R."/>
            <person name="Walenz B."/>
            <person name="Shatkay H."/>
            <person name="Dew I."/>
            <person name="Miller J.R."/>
            <person name="Flanigan M.J."/>
            <person name="Edwards N.J."/>
            <person name="Bolanos R."/>
            <person name="Fasulo D."/>
            <person name="Halldorsson B.V."/>
            <person name="Hannenhalli S."/>
            <person name="Turner R."/>
            <person name="Yooseph S."/>
            <person name="Lu F."/>
            <person name="Nusskern D.R."/>
            <person name="Shue B.C."/>
            <person name="Zheng X.H."/>
            <person name="Zhong F."/>
            <person name="Delcher A.L."/>
            <person name="Huson D.H."/>
            <person name="Kravitz S.A."/>
            <person name="Mouchard L."/>
            <person name="Reinert K."/>
            <person name="Remington K.A."/>
            <person name="Clark A.G."/>
            <person name="Waterman M.S."/>
            <person name="Eichler E.E."/>
            <person name="Adams M.D."/>
            <person name="Hunkapiller M.W."/>
            <person name="Myers E.W."/>
            <person name="Venter J.C."/>
        </authorList>
    </citation>
    <scope>NUCLEOTIDE SEQUENCE [LARGE SCALE GENOMIC DNA]</scope>
</reference>
<reference key="4">
    <citation type="journal article" date="2005" name="Nature">
        <title>Generation and annotation of the DNA sequences of human chromosomes 2 and 4.</title>
        <authorList>
            <person name="Hillier L.W."/>
            <person name="Graves T.A."/>
            <person name="Fulton R.S."/>
            <person name="Fulton L.A."/>
            <person name="Pepin K.H."/>
            <person name="Minx P."/>
            <person name="Wagner-McPherson C."/>
            <person name="Layman D."/>
            <person name="Wylie K."/>
            <person name="Sekhon M."/>
            <person name="Becker M.C."/>
            <person name="Fewell G.A."/>
            <person name="Delehaunty K.D."/>
            <person name="Miner T.L."/>
            <person name="Nash W.E."/>
            <person name="Kremitzki C."/>
            <person name="Oddy L."/>
            <person name="Du H."/>
            <person name="Sun H."/>
            <person name="Bradshaw-Cordum H."/>
            <person name="Ali J."/>
            <person name="Carter J."/>
            <person name="Cordes M."/>
            <person name="Harris A."/>
            <person name="Isak A."/>
            <person name="van Brunt A."/>
            <person name="Nguyen C."/>
            <person name="Du F."/>
            <person name="Courtney L."/>
            <person name="Kalicki J."/>
            <person name="Ozersky P."/>
            <person name="Abbott S."/>
            <person name="Armstrong J."/>
            <person name="Belter E.A."/>
            <person name="Caruso L."/>
            <person name="Cedroni M."/>
            <person name="Cotton M."/>
            <person name="Davidson T."/>
            <person name="Desai A."/>
            <person name="Elliott G."/>
            <person name="Erb T."/>
            <person name="Fronick C."/>
            <person name="Gaige T."/>
            <person name="Haakenson W."/>
            <person name="Haglund K."/>
            <person name="Holmes A."/>
            <person name="Harkins R."/>
            <person name="Kim K."/>
            <person name="Kruchowski S.S."/>
            <person name="Strong C.M."/>
            <person name="Grewal N."/>
            <person name="Goyea E."/>
            <person name="Hou S."/>
            <person name="Levy A."/>
            <person name="Martinka S."/>
            <person name="Mead K."/>
            <person name="McLellan M.D."/>
            <person name="Meyer R."/>
            <person name="Randall-Maher J."/>
            <person name="Tomlinson C."/>
            <person name="Dauphin-Kohlberg S."/>
            <person name="Kozlowicz-Reilly A."/>
            <person name="Shah N."/>
            <person name="Swearengen-Shahid S."/>
            <person name="Snider J."/>
            <person name="Strong J.T."/>
            <person name="Thompson J."/>
            <person name="Yoakum M."/>
            <person name="Leonard S."/>
            <person name="Pearman C."/>
            <person name="Trani L."/>
            <person name="Radionenko M."/>
            <person name="Waligorski J.E."/>
            <person name="Wang C."/>
            <person name="Rock S.M."/>
            <person name="Tin-Wollam A.-M."/>
            <person name="Maupin R."/>
            <person name="Latreille P."/>
            <person name="Wendl M.C."/>
            <person name="Yang S.-P."/>
            <person name="Pohl C."/>
            <person name="Wallis J.W."/>
            <person name="Spieth J."/>
            <person name="Bieri T.A."/>
            <person name="Berkowicz N."/>
            <person name="Nelson J.O."/>
            <person name="Osborne J."/>
            <person name="Ding L."/>
            <person name="Meyer R."/>
            <person name="Sabo A."/>
            <person name="Shotland Y."/>
            <person name="Sinha P."/>
            <person name="Wohldmann P.E."/>
            <person name="Cook L.L."/>
            <person name="Hickenbotham M.T."/>
            <person name="Eldred J."/>
            <person name="Williams D."/>
            <person name="Jones T.A."/>
            <person name="She X."/>
            <person name="Ciccarelli F.D."/>
            <person name="Izaurralde E."/>
            <person name="Taylor J."/>
            <person name="Schmutz J."/>
            <person name="Myers R.M."/>
            <person name="Cox D.R."/>
            <person name="Huang X."/>
            <person name="McPherson J.D."/>
            <person name="Mardis E.R."/>
            <person name="Clifton S.W."/>
            <person name="Warren W.C."/>
            <person name="Chinwalla A.T."/>
            <person name="Eddy S.R."/>
            <person name="Marra M.A."/>
            <person name="Ovcharenko I."/>
            <person name="Furey T.S."/>
            <person name="Miller W."/>
            <person name="Eichler E.E."/>
            <person name="Bork P."/>
            <person name="Suyama M."/>
            <person name="Torrents D."/>
            <person name="Waterston R.H."/>
            <person name="Wilson R.K."/>
        </authorList>
    </citation>
    <scope>NUCLEOTIDE SEQUENCE [LARGE SCALE GENOMIC DNA]</scope>
</reference>
<reference key="5">
    <citation type="journal article" date="2004" name="Genome Res.">
        <title>The status, quality, and expansion of the NIH full-length cDNA project: the Mammalian Gene Collection (MGC).</title>
        <authorList>
            <consortium name="The MGC Project Team"/>
        </authorList>
    </citation>
    <scope>NUCLEOTIDE SEQUENCE [LARGE SCALE MRNA]</scope>
    <source>
        <tissue>Ovary</tissue>
        <tissue>Testis</tissue>
    </source>
</reference>
<reference key="6">
    <citation type="journal article" date="2008" name="Mol. Cell">
        <title>Kinase-selective enrichment enables quantitative phosphoproteomics of the kinome across the cell cycle.</title>
        <authorList>
            <person name="Daub H."/>
            <person name="Olsen J.V."/>
            <person name="Bairlein M."/>
            <person name="Gnad F."/>
            <person name="Oppermann F.S."/>
            <person name="Korner R."/>
            <person name="Greff Z."/>
            <person name="Keri G."/>
            <person name="Stemmann O."/>
            <person name="Mann M."/>
        </authorList>
    </citation>
    <scope>PHOSPHORYLATION [LARGE SCALE ANALYSIS] AT SER-17</scope>
    <scope>IDENTIFICATION BY MASS SPECTROMETRY [LARGE SCALE ANALYSIS]</scope>
    <source>
        <tissue>Cervix carcinoma</tissue>
    </source>
</reference>
<reference key="7">
    <citation type="journal article" date="2010" name="Nat. Genet.">
        <title>Germline mutations in TMEM127 confer susceptibility to pheochromocytoma.</title>
        <authorList>
            <person name="Qin Y."/>
            <person name="Yao L."/>
            <person name="King E.E."/>
            <person name="Buddavarapu K."/>
            <person name="Lenci R.E."/>
            <person name="Chocron E.S."/>
            <person name="Lechleiter J.D."/>
            <person name="Sass M."/>
            <person name="Aronin N."/>
            <person name="Schiavi F."/>
            <person name="Boaretto F."/>
            <person name="Opocher G."/>
            <person name="Toledo R.A."/>
            <person name="Toledo S.P."/>
            <person name="Stiles C."/>
            <person name="Aguiar R.C."/>
            <person name="Dahia P.L."/>
        </authorList>
    </citation>
    <scope>FUNCTION</scope>
    <scope>TISSUE SPECIFICITY</scope>
    <scope>SUBCELLULAR LOCATION</scope>
    <scope>INVOLVEMENT IN PHEOCHROMOCYTOMA</scope>
    <scope>VARIANT PCC MET-90</scope>
</reference>
<reference key="8">
    <citation type="journal article" date="2012" name="Proc. Natl. Acad. Sci. U.S.A.">
        <title>N-terminal acetylome analyses and functional insights of the N-terminal acetyltransferase NatB.</title>
        <authorList>
            <person name="Van Damme P."/>
            <person name="Lasa M."/>
            <person name="Polevoda B."/>
            <person name="Gazquez C."/>
            <person name="Elosegui-Artola A."/>
            <person name="Kim D.S."/>
            <person name="De Juan-Pardo E."/>
            <person name="Demeyer K."/>
            <person name="Hole K."/>
            <person name="Larrea E."/>
            <person name="Timmerman E."/>
            <person name="Prieto J."/>
            <person name="Arnesen T."/>
            <person name="Sherman F."/>
            <person name="Gevaert K."/>
            <person name="Aldabe R."/>
        </authorList>
    </citation>
    <scope>ACETYLATION [LARGE SCALE ANALYSIS] AT MET-1</scope>
    <scope>IDENTIFICATION BY MASS SPECTROMETRY [LARGE SCALE ANALYSIS]</scope>
</reference>
<reference key="9">
    <citation type="journal article" date="2015" name="Cell Rep.">
        <title>An organellar nalpha-acetyltransferase, naa60, acetylates cytosolic N termini of transmembrane proteins and maintains Golgi integrity.</title>
        <authorList>
            <person name="Aksnes H."/>
            <person name="Van Damme P."/>
            <person name="Goris M."/>
            <person name="Starheim K.K."/>
            <person name="Marie M."/>
            <person name="Stoeve S.I."/>
            <person name="Hoel C."/>
            <person name="Kalvik T.V."/>
            <person name="Hole K."/>
            <person name="Glomnes N."/>
            <person name="Furnes C."/>
            <person name="Ljostveit S."/>
            <person name="Ziegler M."/>
            <person name="Niere M."/>
            <person name="Gevaert K."/>
            <person name="Arnesen T."/>
        </authorList>
    </citation>
    <scope>ACETYLATION AT MET-1</scope>
</reference>
<reference key="10">
    <citation type="journal article" date="2010" name="JAMA">
        <title>Spectrum and prevalence of FP/TMEM127 gene mutations in pheochromocytomas and paragangliomas.</title>
        <authorList>
            <person name="Yao L."/>
            <person name="Schiavi F."/>
            <person name="Cascon A."/>
            <person name="Qin Y."/>
            <person name="Inglada-Perez L."/>
            <person name="King E.E."/>
            <person name="Toledo R.A."/>
            <person name="Ercolino T."/>
            <person name="Rapizzi E."/>
            <person name="Ricketts C.J."/>
            <person name="Mori L."/>
            <person name="Giacche M."/>
            <person name="Mendola A."/>
            <person name="Taschin E."/>
            <person name="Boaretto F."/>
            <person name="Loli P."/>
            <person name="Iacobone M."/>
            <person name="Rossi G.P."/>
            <person name="Biondi B."/>
            <person name="Lima-Junior J.V."/>
            <person name="Kater C.E."/>
            <person name="Bex M."/>
            <person name="Vikkula M."/>
            <person name="Grossman A.B."/>
            <person name="Gruber S.B."/>
            <person name="Barontini M."/>
            <person name="Persu A."/>
            <person name="Castellano M."/>
            <person name="Toledo S.P."/>
            <person name="Maher E.R."/>
            <person name="Mannelli M."/>
            <person name="Opocher G."/>
            <person name="Robledo M."/>
            <person name="Dahia P.L."/>
        </authorList>
    </citation>
    <scope>VARIANTS PCC SER-53; ASN-70; ARG-73; MET-90; TRP-94; ARG-140 AND TYR-140</scope>
    <scope>CHARACTERIZATION OF VARIANTS ASN-70; TRP-94; ARG-140 AND TYR-140</scope>
    <scope>SUBCELLULAR LOCATION</scope>
</reference>
<sequence>MYAPGGAGLPGGRRRRSPGGSALPKQPERSLASALPGALSITALCTALAEPAWLHIHGGTCSRQELGVSDVLGYVHPDLLKDFCMNPQTVLLLRVIAAFCFLGILCSLSAFLLDVFGPKHPALKITRRYAFAHILTVLQCATVIGFSYWASELILAQQQQHKKYHGSQVYVTFAVSFYLVAGAGGASILATAANLLRHYPTEEEEQALELLSEMEENEPYPAEYEVINQFQPPPAYTP</sequence>